<name>LEXA_CAUVC</name>
<sequence length="234" mass="25329">MLTRKQHELLMFIHERIKETGVSPSFDEMKEALDLASKSGIHRLITALEERGFIRRLAHRARALEVVKLPQQATAAAPPKGRGAFRPQVFEGGGAPPPAASPAAAANDSRELPILGRIAAGTPIDAIQHERERLPVPEAMLGAGEHYVLEVQGDSMIEAGILDGDYVIIKKGDTATSGEIVVALVGEEATLKRLRKKGGSIALEAANPKYETRIFGPDQVEVQGKLVGLIRRYH</sequence>
<organism>
    <name type="scientific">Caulobacter vibrioides (strain ATCC 19089 / CIP 103742 / CB 15)</name>
    <name type="common">Caulobacter crescentus</name>
    <dbReference type="NCBI Taxonomy" id="190650"/>
    <lineage>
        <taxon>Bacteria</taxon>
        <taxon>Pseudomonadati</taxon>
        <taxon>Pseudomonadota</taxon>
        <taxon>Alphaproteobacteria</taxon>
        <taxon>Caulobacterales</taxon>
        <taxon>Caulobacteraceae</taxon>
        <taxon>Caulobacter</taxon>
    </lineage>
</organism>
<evidence type="ECO:0000255" key="1">
    <source>
        <dbReference type="HAMAP-Rule" id="MF_00015"/>
    </source>
</evidence>
<evidence type="ECO:0000256" key="2">
    <source>
        <dbReference type="SAM" id="MobiDB-lite"/>
    </source>
</evidence>
<evidence type="ECO:0000305" key="3"/>
<proteinExistence type="inferred from homology"/>
<accession>Q9A724</accession>
<comment type="function">
    <text evidence="1">Represses a number of genes involved in the response to DNA damage (SOS response), including recA and lexA. In the presence of single-stranded DNA, RecA interacts with LexA causing an autocatalytic cleavage which disrupts the DNA-binding part of LexA, leading to derepression of the SOS regulon and eventually DNA repair.</text>
</comment>
<comment type="catalytic activity">
    <reaction evidence="1">
        <text>Hydrolysis of Ala-|-Gly bond in repressor LexA.</text>
        <dbReference type="EC" id="3.4.21.88"/>
    </reaction>
</comment>
<comment type="subunit">
    <text evidence="1">Homodimer.</text>
</comment>
<comment type="similarity">
    <text evidence="1">Belongs to the peptidase S24 family.</text>
</comment>
<comment type="sequence caution" evidence="3">
    <conflict type="erroneous initiation">
        <sequence resource="EMBL-CDS" id="AAK23877"/>
    </conflict>
</comment>
<gene>
    <name evidence="1" type="primary">lexA</name>
    <name type="ordered locus">CC_1902</name>
</gene>
<reference key="1">
    <citation type="journal article" date="2001" name="Proc. Natl. Acad. Sci. U.S.A.">
        <title>Complete genome sequence of Caulobacter crescentus.</title>
        <authorList>
            <person name="Nierman W.C."/>
            <person name="Feldblyum T.V."/>
            <person name="Laub M.T."/>
            <person name="Paulsen I.T."/>
            <person name="Nelson K.E."/>
            <person name="Eisen J.A."/>
            <person name="Heidelberg J.F."/>
            <person name="Alley M.R.K."/>
            <person name="Ohta N."/>
            <person name="Maddock J.R."/>
            <person name="Potocka I."/>
            <person name="Nelson W.C."/>
            <person name="Newton A."/>
            <person name="Stephens C."/>
            <person name="Phadke N.D."/>
            <person name="Ely B."/>
            <person name="DeBoy R.T."/>
            <person name="Dodson R.J."/>
            <person name="Durkin A.S."/>
            <person name="Gwinn M.L."/>
            <person name="Haft D.H."/>
            <person name="Kolonay J.F."/>
            <person name="Smit J."/>
            <person name="Craven M.B."/>
            <person name="Khouri H.M."/>
            <person name="Shetty J."/>
            <person name="Berry K.J."/>
            <person name="Utterback T.R."/>
            <person name="Tran K."/>
            <person name="Wolf A.M."/>
            <person name="Vamathevan J.J."/>
            <person name="Ermolaeva M.D."/>
            <person name="White O."/>
            <person name="Salzberg S.L."/>
            <person name="Venter J.C."/>
            <person name="Shapiro L."/>
            <person name="Fraser C.M."/>
        </authorList>
    </citation>
    <scope>NUCLEOTIDE SEQUENCE [LARGE SCALE GENOMIC DNA]</scope>
    <source>
        <strain>ATCC 19089 / CIP 103742 / CB 15</strain>
    </source>
</reference>
<protein>
    <recommendedName>
        <fullName evidence="1">LexA repressor</fullName>
        <ecNumber evidence="1">3.4.21.88</ecNumber>
    </recommendedName>
</protein>
<keyword id="KW-0068">Autocatalytic cleavage</keyword>
<keyword id="KW-0227">DNA damage</keyword>
<keyword id="KW-0234">DNA repair</keyword>
<keyword id="KW-0235">DNA replication</keyword>
<keyword id="KW-0238">DNA-binding</keyword>
<keyword id="KW-0378">Hydrolase</keyword>
<keyword id="KW-1185">Reference proteome</keyword>
<keyword id="KW-0678">Repressor</keyword>
<keyword id="KW-0742">SOS response</keyword>
<keyword id="KW-0804">Transcription</keyword>
<keyword id="KW-0805">Transcription regulation</keyword>
<feature type="chain" id="PRO_0000170023" description="LexA repressor">
    <location>
        <begin position="1"/>
        <end position="234"/>
    </location>
</feature>
<feature type="DNA-binding region" description="H-T-H motif" evidence="1">
    <location>
        <begin position="26"/>
        <end position="46"/>
    </location>
</feature>
<feature type="region of interest" description="Disordered" evidence="2">
    <location>
        <begin position="73"/>
        <end position="107"/>
    </location>
</feature>
<feature type="active site" description="For autocatalytic cleavage activity" evidence="1">
    <location>
        <position position="155"/>
    </location>
</feature>
<feature type="active site" description="For autocatalytic cleavage activity" evidence="1">
    <location>
        <position position="192"/>
    </location>
</feature>
<feature type="site" description="Cleavage; by autolysis" evidence="1">
    <location>
        <begin position="120"/>
        <end position="121"/>
    </location>
</feature>
<dbReference type="EC" id="3.4.21.88" evidence="1"/>
<dbReference type="EMBL" id="AE005673">
    <property type="protein sequence ID" value="AAK23877.1"/>
    <property type="status" value="ALT_INIT"/>
    <property type="molecule type" value="Genomic_DNA"/>
</dbReference>
<dbReference type="PIR" id="A87485">
    <property type="entry name" value="A87485"/>
</dbReference>
<dbReference type="RefSeq" id="NP_420709.1">
    <property type="nucleotide sequence ID" value="NC_002696.2"/>
</dbReference>
<dbReference type="RefSeq" id="WP_024265748.1">
    <property type="nucleotide sequence ID" value="NC_002696.2"/>
</dbReference>
<dbReference type="SMR" id="Q9A724"/>
<dbReference type="STRING" id="190650.CC_1902"/>
<dbReference type="MEROPS" id="S24.001"/>
<dbReference type="EnsemblBacteria" id="AAK23877">
    <property type="protein sequence ID" value="AAK23877"/>
    <property type="gene ID" value="CC_1902"/>
</dbReference>
<dbReference type="KEGG" id="ccr:CC_1902"/>
<dbReference type="PATRIC" id="fig|190650.5.peg.1918"/>
<dbReference type="eggNOG" id="COG1974">
    <property type="taxonomic scope" value="Bacteria"/>
</dbReference>
<dbReference type="HOGENOM" id="CLU_066192_45_2_5"/>
<dbReference type="Proteomes" id="UP000001816">
    <property type="component" value="Chromosome"/>
</dbReference>
<dbReference type="CollecTF" id="EXPREG_000014f0"/>
<dbReference type="GO" id="GO:0003677">
    <property type="term" value="F:DNA binding"/>
    <property type="evidence" value="ECO:0007669"/>
    <property type="project" value="UniProtKB-UniRule"/>
</dbReference>
<dbReference type="GO" id="GO:0004252">
    <property type="term" value="F:serine-type endopeptidase activity"/>
    <property type="evidence" value="ECO:0007669"/>
    <property type="project" value="UniProtKB-UniRule"/>
</dbReference>
<dbReference type="GO" id="GO:0006281">
    <property type="term" value="P:DNA repair"/>
    <property type="evidence" value="ECO:0007669"/>
    <property type="project" value="UniProtKB-UniRule"/>
</dbReference>
<dbReference type="GO" id="GO:0006260">
    <property type="term" value="P:DNA replication"/>
    <property type="evidence" value="ECO:0007669"/>
    <property type="project" value="UniProtKB-UniRule"/>
</dbReference>
<dbReference type="GO" id="GO:0045892">
    <property type="term" value="P:negative regulation of DNA-templated transcription"/>
    <property type="evidence" value="ECO:0000269"/>
    <property type="project" value="CollecTF"/>
</dbReference>
<dbReference type="GO" id="GO:0045893">
    <property type="term" value="P:positive regulation of DNA-templated transcription"/>
    <property type="evidence" value="ECO:0000269"/>
    <property type="project" value="CollecTF"/>
</dbReference>
<dbReference type="GO" id="GO:0006508">
    <property type="term" value="P:proteolysis"/>
    <property type="evidence" value="ECO:0007669"/>
    <property type="project" value="InterPro"/>
</dbReference>
<dbReference type="GO" id="GO:0009432">
    <property type="term" value="P:SOS response"/>
    <property type="evidence" value="ECO:0000269"/>
    <property type="project" value="CollecTF"/>
</dbReference>
<dbReference type="CDD" id="cd06529">
    <property type="entry name" value="S24_LexA-like"/>
    <property type="match status" value="1"/>
</dbReference>
<dbReference type="FunFam" id="1.10.10.10:FF:000102">
    <property type="entry name" value="LexA repressor"/>
    <property type="match status" value="1"/>
</dbReference>
<dbReference type="FunFam" id="2.10.109.10:FF:000001">
    <property type="entry name" value="LexA repressor"/>
    <property type="match status" value="1"/>
</dbReference>
<dbReference type="Gene3D" id="2.10.109.10">
    <property type="entry name" value="Umud Fragment, subunit A"/>
    <property type="match status" value="1"/>
</dbReference>
<dbReference type="Gene3D" id="1.10.10.10">
    <property type="entry name" value="Winged helix-like DNA-binding domain superfamily/Winged helix DNA-binding domain"/>
    <property type="match status" value="1"/>
</dbReference>
<dbReference type="HAMAP" id="MF_00015">
    <property type="entry name" value="LexA"/>
    <property type="match status" value="1"/>
</dbReference>
<dbReference type="InterPro" id="IPR006200">
    <property type="entry name" value="LexA"/>
</dbReference>
<dbReference type="InterPro" id="IPR039418">
    <property type="entry name" value="LexA-like"/>
</dbReference>
<dbReference type="InterPro" id="IPR036286">
    <property type="entry name" value="LexA/Signal_pep-like_sf"/>
</dbReference>
<dbReference type="InterPro" id="IPR006199">
    <property type="entry name" value="LexA_DNA-bd_dom"/>
</dbReference>
<dbReference type="InterPro" id="IPR050077">
    <property type="entry name" value="LexA_repressor"/>
</dbReference>
<dbReference type="InterPro" id="IPR006197">
    <property type="entry name" value="Peptidase_S24_LexA"/>
</dbReference>
<dbReference type="InterPro" id="IPR015927">
    <property type="entry name" value="Peptidase_S24_S26A/B/C"/>
</dbReference>
<dbReference type="InterPro" id="IPR036388">
    <property type="entry name" value="WH-like_DNA-bd_sf"/>
</dbReference>
<dbReference type="InterPro" id="IPR036390">
    <property type="entry name" value="WH_DNA-bd_sf"/>
</dbReference>
<dbReference type="NCBIfam" id="TIGR00498">
    <property type="entry name" value="lexA"/>
    <property type="match status" value="1"/>
</dbReference>
<dbReference type="PANTHER" id="PTHR33516">
    <property type="entry name" value="LEXA REPRESSOR"/>
    <property type="match status" value="1"/>
</dbReference>
<dbReference type="PANTHER" id="PTHR33516:SF2">
    <property type="entry name" value="LEXA REPRESSOR-RELATED"/>
    <property type="match status" value="1"/>
</dbReference>
<dbReference type="Pfam" id="PF01726">
    <property type="entry name" value="LexA_DNA_bind"/>
    <property type="match status" value="1"/>
</dbReference>
<dbReference type="Pfam" id="PF00717">
    <property type="entry name" value="Peptidase_S24"/>
    <property type="match status" value="1"/>
</dbReference>
<dbReference type="PRINTS" id="PR00726">
    <property type="entry name" value="LEXASERPTASE"/>
</dbReference>
<dbReference type="SUPFAM" id="SSF51306">
    <property type="entry name" value="LexA/Signal peptidase"/>
    <property type="match status" value="1"/>
</dbReference>
<dbReference type="SUPFAM" id="SSF46785">
    <property type="entry name" value="Winged helix' DNA-binding domain"/>
    <property type="match status" value="1"/>
</dbReference>